<proteinExistence type="evidence at transcript level"/>
<feature type="signal peptide" evidence="2">
    <location>
        <begin position="1"/>
        <end position="22"/>
    </location>
</feature>
<feature type="chain" id="PRO_0000317385" description="Contactin-associated protein-like 5">
    <location>
        <begin position="23"/>
        <end position="1305"/>
    </location>
</feature>
<feature type="topological domain" description="Extracellular" evidence="2">
    <location>
        <begin position="23"/>
        <end position="1236"/>
    </location>
</feature>
<feature type="transmembrane region" description="Helical" evidence="2">
    <location>
        <begin position="1237"/>
        <end position="1257"/>
    </location>
</feature>
<feature type="topological domain" description="Cytoplasmic" evidence="2">
    <location>
        <begin position="1258"/>
        <end position="1305"/>
    </location>
</feature>
<feature type="domain" description="F5/8 type C" evidence="4">
    <location>
        <begin position="23"/>
        <end position="174"/>
    </location>
</feature>
<feature type="domain" description="Laminin G-like 1" evidence="5">
    <location>
        <begin position="180"/>
        <end position="360"/>
    </location>
</feature>
<feature type="domain" description="Laminin G-like 2" evidence="5">
    <location>
        <begin position="367"/>
        <end position="544"/>
    </location>
</feature>
<feature type="domain" description="EGF-like 1" evidence="3">
    <location>
        <begin position="546"/>
        <end position="583"/>
    </location>
</feature>
<feature type="domain" description="Fibrinogen C-terminal" evidence="6">
    <location>
        <begin position="584"/>
        <end position="790"/>
    </location>
</feature>
<feature type="domain" description="Laminin G-like 3" evidence="5">
    <location>
        <begin position="791"/>
        <end position="956"/>
    </location>
</feature>
<feature type="domain" description="EGF-like 2" evidence="3">
    <location>
        <begin position="957"/>
        <end position="995"/>
    </location>
</feature>
<feature type="domain" description="Laminin G-like 4" evidence="5">
    <location>
        <begin position="1017"/>
        <end position="1198"/>
    </location>
</feature>
<feature type="disulfide bond" evidence="1">
    <location>
        <begin position="329"/>
        <end position="360"/>
    </location>
</feature>
<feature type="disulfide bond" evidence="1">
    <location>
        <begin position="512"/>
        <end position="544"/>
    </location>
</feature>
<feature type="disulfide bond" evidence="1">
    <location>
        <begin position="550"/>
        <end position="561"/>
    </location>
</feature>
<feature type="disulfide bond" evidence="1">
    <location>
        <begin position="555"/>
        <end position="570"/>
    </location>
</feature>
<feature type="disulfide bond" evidence="1">
    <location>
        <begin position="572"/>
        <end position="582"/>
    </location>
</feature>
<feature type="disulfide bond" evidence="1">
    <location>
        <begin position="929"/>
        <end position="956"/>
    </location>
</feature>
<feature type="disulfide bond" evidence="1">
    <location>
        <begin position="960"/>
        <end position="973"/>
    </location>
</feature>
<feature type="disulfide bond" evidence="1">
    <location>
        <begin position="967"/>
        <end position="982"/>
    </location>
</feature>
<feature type="disulfide bond" evidence="1">
    <location>
        <begin position="984"/>
        <end position="994"/>
    </location>
</feature>
<feature type="disulfide bond" evidence="1">
    <location>
        <begin position="1163"/>
        <end position="1198"/>
    </location>
</feature>
<keyword id="KW-0130">Cell adhesion</keyword>
<keyword id="KW-1015">Disulfide bond</keyword>
<keyword id="KW-0245">EGF-like domain</keyword>
<keyword id="KW-0472">Membrane</keyword>
<keyword id="KW-1185">Reference proteome</keyword>
<keyword id="KW-0677">Repeat</keyword>
<keyword id="KW-0732">Signal</keyword>
<keyword id="KW-0812">Transmembrane</keyword>
<keyword id="KW-1133">Transmembrane helix</keyword>
<protein>
    <recommendedName>
        <fullName>Contactin-associated protein-like 5</fullName>
    </recommendedName>
    <alternativeName>
        <fullName>Cell recognition molecule Caspr5</fullName>
    </alternativeName>
</protein>
<reference key="1">
    <citation type="journal article" date="2004" name="Nature">
        <title>Sequence and comparative analysis of the chicken genome provide unique perspectives on vertebrate evolution.</title>
        <authorList>
            <person name="Hillier L.W."/>
            <person name="Miller W."/>
            <person name="Birney E."/>
            <person name="Warren W."/>
            <person name="Hardison R.C."/>
            <person name="Ponting C.P."/>
            <person name="Bork P."/>
            <person name="Burt D.W."/>
            <person name="Groenen M.A.M."/>
            <person name="Delany M.E."/>
            <person name="Dodgson J.B."/>
            <person name="Chinwalla A.T."/>
            <person name="Cliften P.F."/>
            <person name="Clifton S.W."/>
            <person name="Delehaunty K.D."/>
            <person name="Fronick C."/>
            <person name="Fulton R.S."/>
            <person name="Graves T.A."/>
            <person name="Kremitzki C."/>
            <person name="Layman D."/>
            <person name="Magrini V."/>
            <person name="McPherson J.D."/>
            <person name="Miner T.L."/>
            <person name="Minx P."/>
            <person name="Nash W.E."/>
            <person name="Nhan M.N."/>
            <person name="Nelson J.O."/>
            <person name="Oddy L.G."/>
            <person name="Pohl C.S."/>
            <person name="Randall-Maher J."/>
            <person name="Smith S.M."/>
            <person name="Wallis J.W."/>
            <person name="Yang S.-P."/>
            <person name="Romanov M.N."/>
            <person name="Rondelli C.M."/>
            <person name="Paton B."/>
            <person name="Smith J."/>
            <person name="Morrice D."/>
            <person name="Daniels L."/>
            <person name="Tempest H.G."/>
            <person name="Robertson L."/>
            <person name="Masabanda J.S."/>
            <person name="Griffin D.K."/>
            <person name="Vignal A."/>
            <person name="Fillon V."/>
            <person name="Jacobbson L."/>
            <person name="Kerje S."/>
            <person name="Andersson L."/>
            <person name="Crooijmans R.P."/>
            <person name="Aerts J."/>
            <person name="van der Poel J.J."/>
            <person name="Ellegren H."/>
            <person name="Caldwell R.B."/>
            <person name="Hubbard S.J."/>
            <person name="Grafham D.V."/>
            <person name="Kierzek A.M."/>
            <person name="McLaren S.R."/>
            <person name="Overton I.M."/>
            <person name="Arakawa H."/>
            <person name="Beattie K.J."/>
            <person name="Bezzubov Y."/>
            <person name="Boardman P.E."/>
            <person name="Bonfield J.K."/>
            <person name="Croning M.D.R."/>
            <person name="Davies R.M."/>
            <person name="Francis M.D."/>
            <person name="Humphray S.J."/>
            <person name="Scott C.E."/>
            <person name="Taylor R.G."/>
            <person name="Tickle C."/>
            <person name="Brown W.R.A."/>
            <person name="Rogers J."/>
            <person name="Buerstedde J.-M."/>
            <person name="Wilson S.A."/>
            <person name="Stubbs L."/>
            <person name="Ovcharenko I."/>
            <person name="Gordon L."/>
            <person name="Lucas S."/>
            <person name="Miller M.M."/>
            <person name="Inoko H."/>
            <person name="Shiina T."/>
            <person name="Kaufman J."/>
            <person name="Salomonsen J."/>
            <person name="Skjoedt K."/>
            <person name="Wong G.K.-S."/>
            <person name="Wang J."/>
            <person name="Liu B."/>
            <person name="Wang J."/>
            <person name="Yu J."/>
            <person name="Yang H."/>
            <person name="Nefedov M."/>
            <person name="Koriabine M."/>
            <person name="Dejong P.J."/>
            <person name="Goodstadt L."/>
            <person name="Webber C."/>
            <person name="Dickens N.J."/>
            <person name="Letunic I."/>
            <person name="Suyama M."/>
            <person name="Torrents D."/>
            <person name="von Mering C."/>
            <person name="Zdobnov E.M."/>
            <person name="Makova K."/>
            <person name="Nekrutenko A."/>
            <person name="Elnitski L."/>
            <person name="Eswara P."/>
            <person name="King D.C."/>
            <person name="Yang S.-P."/>
            <person name="Tyekucheva S."/>
            <person name="Radakrishnan A."/>
            <person name="Harris R.S."/>
            <person name="Chiaromonte F."/>
            <person name="Taylor J."/>
            <person name="He J."/>
            <person name="Rijnkels M."/>
            <person name="Griffiths-Jones S."/>
            <person name="Ureta-Vidal A."/>
            <person name="Hoffman M.M."/>
            <person name="Severin J."/>
            <person name="Searle S.M.J."/>
            <person name="Law A.S."/>
            <person name="Speed D."/>
            <person name="Waddington D."/>
            <person name="Cheng Z."/>
            <person name="Tuzun E."/>
            <person name="Eichler E."/>
            <person name="Bao Z."/>
            <person name="Flicek P."/>
            <person name="Shteynberg D.D."/>
            <person name="Brent M.R."/>
            <person name="Bye J.M."/>
            <person name="Huckle E.J."/>
            <person name="Chatterji S."/>
            <person name="Dewey C."/>
            <person name="Pachter L."/>
            <person name="Kouranov A."/>
            <person name="Mourelatos Z."/>
            <person name="Hatzigeorgiou A.G."/>
            <person name="Paterson A.H."/>
            <person name="Ivarie R."/>
            <person name="Brandstrom M."/>
            <person name="Axelsson E."/>
            <person name="Backstrom N."/>
            <person name="Berlin S."/>
            <person name="Webster M.T."/>
            <person name="Pourquie O."/>
            <person name="Reymond A."/>
            <person name="Ucla C."/>
            <person name="Antonarakis S.E."/>
            <person name="Long M."/>
            <person name="Emerson J.J."/>
            <person name="Betran E."/>
            <person name="Dupanloup I."/>
            <person name="Kaessmann H."/>
            <person name="Hinrichs A.S."/>
            <person name="Bejerano G."/>
            <person name="Furey T.S."/>
            <person name="Harte R.A."/>
            <person name="Raney B."/>
            <person name="Siepel A."/>
            <person name="Kent W.J."/>
            <person name="Haussler D."/>
            <person name="Eyras E."/>
            <person name="Castelo R."/>
            <person name="Abril J.F."/>
            <person name="Castellano S."/>
            <person name="Camara F."/>
            <person name="Parra G."/>
            <person name="Guigo R."/>
            <person name="Bourque G."/>
            <person name="Tesler G."/>
            <person name="Pevzner P.A."/>
            <person name="Smit A."/>
            <person name="Fulton L.A."/>
            <person name="Mardis E.R."/>
            <person name="Wilson R.K."/>
        </authorList>
    </citation>
    <scope>NUCLEOTIDE SEQUENCE [LARGE SCALE GENOMIC DNA]</scope>
    <source>
        <strain>Red jungle fowl</strain>
    </source>
</reference>
<reference key="2">
    <citation type="journal article" date="2006" name="Mamm. Genome">
        <title>New members of the neurexin superfamily: multiple rodent homologues of the human CASPR5 gene.</title>
        <authorList>
            <person name="Traut W."/>
            <person name="Weichenhan D."/>
            <person name="Himmelbauer H."/>
            <person name="Winking H."/>
        </authorList>
    </citation>
    <scope>IDENTIFICATION</scope>
</reference>
<dbReference type="EMBL" id="BN000918">
    <property type="protein sequence ID" value="CAJ77883.1"/>
    <property type="molecule type" value="mRNA"/>
</dbReference>
<dbReference type="RefSeq" id="NP_001041544.1">
    <property type="nucleotide sequence ID" value="NM_001048079.1"/>
</dbReference>
<dbReference type="SMR" id="Q0V8S9"/>
<dbReference type="FunCoup" id="Q0V8S9">
    <property type="interactions" value="153"/>
</dbReference>
<dbReference type="STRING" id="9031.ENSGALP00000018862"/>
<dbReference type="GlyGen" id="Q0V8S9">
    <property type="glycosylation" value="1 site"/>
</dbReference>
<dbReference type="PaxDb" id="9031-ENSGALP00000018862"/>
<dbReference type="GeneID" id="424231"/>
<dbReference type="KEGG" id="gga:424231"/>
<dbReference type="CTD" id="129684"/>
<dbReference type="VEuPathDB" id="HostDB:geneid_424231"/>
<dbReference type="eggNOG" id="KOG3516">
    <property type="taxonomic scope" value="Eukaryota"/>
</dbReference>
<dbReference type="HOGENOM" id="CLU_003504_1_0_1"/>
<dbReference type="InParanoid" id="Q0V8S9"/>
<dbReference type="OrthoDB" id="26719at2759"/>
<dbReference type="PhylomeDB" id="Q0V8S9"/>
<dbReference type="PRO" id="PR:Q0V8S9"/>
<dbReference type="Proteomes" id="UP000000539">
    <property type="component" value="Unassembled WGS sequence"/>
</dbReference>
<dbReference type="GO" id="GO:0016020">
    <property type="term" value="C:membrane"/>
    <property type="evidence" value="ECO:0007669"/>
    <property type="project" value="UniProtKB-SubCell"/>
</dbReference>
<dbReference type="GO" id="GO:0007155">
    <property type="term" value="P:cell adhesion"/>
    <property type="evidence" value="ECO:0007669"/>
    <property type="project" value="UniProtKB-KW"/>
</dbReference>
<dbReference type="CDD" id="cd00054">
    <property type="entry name" value="EGF_CA"/>
    <property type="match status" value="2"/>
</dbReference>
<dbReference type="CDD" id="cd00057">
    <property type="entry name" value="FA58C"/>
    <property type="match status" value="1"/>
</dbReference>
<dbReference type="CDD" id="cd00110">
    <property type="entry name" value="LamG"/>
    <property type="match status" value="4"/>
</dbReference>
<dbReference type="FunFam" id="2.60.120.1000:FF:000005">
    <property type="entry name" value="Contactin associated protein-like 2"/>
    <property type="match status" value="1"/>
</dbReference>
<dbReference type="FunFam" id="2.60.120.260:FF:000016">
    <property type="entry name" value="Contactin-associated protein-like 4 isoform 1"/>
    <property type="match status" value="1"/>
</dbReference>
<dbReference type="FunFam" id="2.60.120.200:FF:000026">
    <property type="entry name" value="contactin-associated protein-like 4 isoform X1"/>
    <property type="match status" value="1"/>
</dbReference>
<dbReference type="Gene3D" id="2.60.120.1000">
    <property type="match status" value="1"/>
</dbReference>
<dbReference type="Gene3D" id="2.60.120.200">
    <property type="match status" value="4"/>
</dbReference>
<dbReference type="Gene3D" id="2.60.120.260">
    <property type="entry name" value="Galactose-binding domain-like"/>
    <property type="match status" value="1"/>
</dbReference>
<dbReference type="Gene3D" id="2.10.25.10">
    <property type="entry name" value="Laminin"/>
    <property type="match status" value="1"/>
</dbReference>
<dbReference type="InterPro" id="IPR013320">
    <property type="entry name" value="ConA-like_dom_sf"/>
</dbReference>
<dbReference type="InterPro" id="IPR000742">
    <property type="entry name" value="EGF-like_dom"/>
</dbReference>
<dbReference type="InterPro" id="IPR000421">
    <property type="entry name" value="FA58C"/>
</dbReference>
<dbReference type="InterPro" id="IPR036056">
    <property type="entry name" value="Fibrinogen-like_C"/>
</dbReference>
<dbReference type="InterPro" id="IPR002181">
    <property type="entry name" value="Fibrinogen_a/b/g_C_dom"/>
</dbReference>
<dbReference type="InterPro" id="IPR008979">
    <property type="entry name" value="Galactose-bd-like_sf"/>
</dbReference>
<dbReference type="InterPro" id="IPR001791">
    <property type="entry name" value="Laminin_G"/>
</dbReference>
<dbReference type="InterPro" id="IPR050372">
    <property type="entry name" value="Neurexin-related_CASP"/>
</dbReference>
<dbReference type="PANTHER" id="PTHR15036:SF46">
    <property type="entry name" value="CONTACTIN-ASSOCIATED PROTEIN-LIKE 5"/>
    <property type="match status" value="1"/>
</dbReference>
<dbReference type="PANTHER" id="PTHR15036">
    <property type="entry name" value="PIKACHURIN-LIKE PROTEIN"/>
    <property type="match status" value="1"/>
</dbReference>
<dbReference type="Pfam" id="PF00008">
    <property type="entry name" value="EGF"/>
    <property type="match status" value="1"/>
</dbReference>
<dbReference type="Pfam" id="PF00754">
    <property type="entry name" value="F5_F8_type_C"/>
    <property type="match status" value="1"/>
</dbReference>
<dbReference type="Pfam" id="PF02210">
    <property type="entry name" value="Laminin_G_2"/>
    <property type="match status" value="4"/>
</dbReference>
<dbReference type="SMART" id="SM00181">
    <property type="entry name" value="EGF"/>
    <property type="match status" value="2"/>
</dbReference>
<dbReference type="SMART" id="SM00231">
    <property type="entry name" value="FA58C"/>
    <property type="match status" value="1"/>
</dbReference>
<dbReference type="SMART" id="SM00282">
    <property type="entry name" value="LamG"/>
    <property type="match status" value="4"/>
</dbReference>
<dbReference type="SUPFAM" id="SSF49899">
    <property type="entry name" value="Concanavalin A-like lectins/glucanases"/>
    <property type="match status" value="4"/>
</dbReference>
<dbReference type="SUPFAM" id="SSF57196">
    <property type="entry name" value="EGF/Laminin"/>
    <property type="match status" value="1"/>
</dbReference>
<dbReference type="SUPFAM" id="SSF56496">
    <property type="entry name" value="Fibrinogen C-terminal domain-like"/>
    <property type="match status" value="1"/>
</dbReference>
<dbReference type="SUPFAM" id="SSF49785">
    <property type="entry name" value="Galactose-binding domain-like"/>
    <property type="match status" value="1"/>
</dbReference>
<dbReference type="PROSITE" id="PS50026">
    <property type="entry name" value="EGF_3"/>
    <property type="match status" value="2"/>
</dbReference>
<dbReference type="PROSITE" id="PS01285">
    <property type="entry name" value="FA58C_1"/>
    <property type="match status" value="1"/>
</dbReference>
<dbReference type="PROSITE" id="PS01286">
    <property type="entry name" value="FA58C_2"/>
    <property type="match status" value="1"/>
</dbReference>
<dbReference type="PROSITE" id="PS50022">
    <property type="entry name" value="FA58C_3"/>
    <property type="match status" value="1"/>
</dbReference>
<dbReference type="PROSITE" id="PS51406">
    <property type="entry name" value="FIBRINOGEN_C_2"/>
    <property type="match status" value="1"/>
</dbReference>
<dbReference type="PROSITE" id="PS50025">
    <property type="entry name" value="LAM_G_DOMAIN"/>
    <property type="match status" value="4"/>
</dbReference>
<name>CNTP5_CHICK</name>
<organism>
    <name type="scientific">Gallus gallus</name>
    <name type="common">Chicken</name>
    <dbReference type="NCBI Taxonomy" id="9031"/>
    <lineage>
        <taxon>Eukaryota</taxon>
        <taxon>Metazoa</taxon>
        <taxon>Chordata</taxon>
        <taxon>Craniata</taxon>
        <taxon>Vertebrata</taxon>
        <taxon>Euteleostomi</taxon>
        <taxon>Archelosauria</taxon>
        <taxon>Archosauria</taxon>
        <taxon>Dinosauria</taxon>
        <taxon>Saurischia</taxon>
        <taxon>Theropoda</taxon>
        <taxon>Coelurosauria</taxon>
        <taxon>Aves</taxon>
        <taxon>Neognathae</taxon>
        <taxon>Galloanserae</taxon>
        <taxon>Galliformes</taxon>
        <taxon>Phasianidae</taxon>
        <taxon>Phasianinae</taxon>
        <taxon>Gallus</taxon>
    </lineage>
</organism>
<comment type="function">
    <text>May play a role in the correct development and proper functioning of the peripheral and central nervous system and be involved in cell adhesion and intercellular communication.</text>
</comment>
<comment type="subcellular location">
    <subcellularLocation>
        <location evidence="7">Membrane</location>
        <topology evidence="7">Single-pass type I membrane protein</topology>
    </subcellularLocation>
</comment>
<comment type="tissue specificity">
    <text>Expressed in brain.</text>
</comment>
<comment type="similarity">
    <text evidence="7">Belongs to the neurexin family.</text>
</comment>
<sequence length="1305" mass="145614">MDSPALGAVALLLAGFWHLGLTATNYNCDGALVSTLPSSAFTSSSEFFSTHSPSFAKLNRRDGAGGWSPLDSNEQQWLQVDLGDRVEIVGVATQGRYGSSDWVTSYTLMFSDTGRNWKQYRKDDTVWVFTGNSNADSVVHHKLLHSMKARFLRFVPLKWNVGGHIGLRVEVFGCSYKSDIADFDGRSSLLYRFNQKLMSTFKDVVSLKFKSMQEDGVLFHGEGQRGDYITLELQKGKLSLHINLGDSNLHFTNSHTSVTLGSLLDDQHWHSVLIERFNKQVNFTVDKHTQHFRTKGDSDHLDIDYELSFGGIPVPGKPGTFQRKNFHGCIENLYYNGVNIIDLAKRRKPQIYTGNVTFSCSEPQIVPITFVSSSRSYLLLPGTPQIDGLSVSFQFRTWNKDGLLLSTELSENSGSLLVYLHGGRLTLLIQKVAEDPVEISEGTNLHDGLWHSLNINARRHRITLTLDNNAATASHATTVSRIYSGNSYYFGGCPDNFTDSQCLNPITAFQGCMRLIFIDNQPKDLILVQQGSLGNFSDLHIDLCDIKDRCLPNYCEHGGKCSQSWTTFYCDCNDTSYMGATCHNSIYEQSCEAYRHQGKTSDFFYIDSDGSGPLGPLRVFCNITEDKIWTAVQHNNTGLTRVQGAGPEKPYTMSFNYNSSAEQLEAVINSAEYCEQEAAYHCKKSRLLNTPNGIPFAWWVGRANEKHLYWGGSLPGIQQCACGLEESCLDMRYFCNCDADREEWTNDTGLLAFKDHLPVTQIVITDTNRSNSEAAWKIGPLHCYGDRQFWNAASFNTEASYLHFPTFHAEVSADISFFFKTTSLSGVFLENLGMKDFIRVEIRSPKEITFSIDVGNGPTEATVQSPTPLNDNQWHYVRAERNLKQTSLQVDNLPKKVLEAPAEGHFRLQLNSQLFVGGTASRQKGFLGCIRSLHLNGQKLDLEERAKMTPGVKPGCPGHCSSYGNLCHNGGKCVEKYNGYSCDCTSSAYEGPFCKEEVSALFEAGTSITYIFQEPYPVTKNASTSSSAIYADAITSKENIAFSFLTAHAPSLLLYINTYFHEYLAVILSKNGSLQVRYKLSKDGLLIFTIDSGNFANREMHHVKINREGRELIIQVDQVIKLKHNFSEIDFKAIKSLTLGKVTDSLPLDPEVSKANAYGFTGCMSSVWYNHVAPLKAALRHPSIAPVTVKGSLTESSCSSLMETDVNTATTIYSSSDPFGKTDEREPLTNAVRSDSAVIGGVIAVVIFIIFCIIAIMSRFLYQHKQAHRSSQTKEKEYPENLESSFKADIDLQNTVSECKREYFI</sequence>
<evidence type="ECO:0000250" key="1"/>
<evidence type="ECO:0000255" key="2"/>
<evidence type="ECO:0000255" key="3">
    <source>
        <dbReference type="PROSITE-ProRule" id="PRU00076"/>
    </source>
</evidence>
<evidence type="ECO:0000255" key="4">
    <source>
        <dbReference type="PROSITE-ProRule" id="PRU00081"/>
    </source>
</evidence>
<evidence type="ECO:0000255" key="5">
    <source>
        <dbReference type="PROSITE-ProRule" id="PRU00122"/>
    </source>
</evidence>
<evidence type="ECO:0000255" key="6">
    <source>
        <dbReference type="PROSITE-ProRule" id="PRU00739"/>
    </source>
</evidence>
<evidence type="ECO:0000305" key="7"/>
<accession>Q0V8S9</accession>
<gene>
    <name type="primary">CNTNAP5</name>
    <name type="synonym">CASPR5</name>
</gene>